<dbReference type="EC" id="2.4.2.7" evidence="1"/>
<dbReference type="EMBL" id="CP000411">
    <property type="protein sequence ID" value="ABJ56971.1"/>
    <property type="molecule type" value="Genomic_DNA"/>
</dbReference>
<dbReference type="RefSeq" id="WP_002821311.1">
    <property type="nucleotide sequence ID" value="NC_008528.1"/>
</dbReference>
<dbReference type="SMR" id="Q04F01"/>
<dbReference type="STRING" id="203123.OEOE_1069"/>
<dbReference type="KEGG" id="ooe:OEOE_1069"/>
<dbReference type="eggNOG" id="COG0503">
    <property type="taxonomic scope" value="Bacteria"/>
</dbReference>
<dbReference type="HOGENOM" id="CLU_063339_3_0_9"/>
<dbReference type="UniPathway" id="UPA00588">
    <property type="reaction ID" value="UER00646"/>
</dbReference>
<dbReference type="Proteomes" id="UP000000774">
    <property type="component" value="Chromosome"/>
</dbReference>
<dbReference type="GO" id="GO:0005737">
    <property type="term" value="C:cytoplasm"/>
    <property type="evidence" value="ECO:0007669"/>
    <property type="project" value="UniProtKB-SubCell"/>
</dbReference>
<dbReference type="GO" id="GO:0002055">
    <property type="term" value="F:adenine binding"/>
    <property type="evidence" value="ECO:0007669"/>
    <property type="project" value="TreeGrafter"/>
</dbReference>
<dbReference type="GO" id="GO:0003999">
    <property type="term" value="F:adenine phosphoribosyltransferase activity"/>
    <property type="evidence" value="ECO:0007669"/>
    <property type="project" value="UniProtKB-UniRule"/>
</dbReference>
<dbReference type="GO" id="GO:0016208">
    <property type="term" value="F:AMP binding"/>
    <property type="evidence" value="ECO:0007669"/>
    <property type="project" value="TreeGrafter"/>
</dbReference>
<dbReference type="GO" id="GO:0006168">
    <property type="term" value="P:adenine salvage"/>
    <property type="evidence" value="ECO:0007669"/>
    <property type="project" value="InterPro"/>
</dbReference>
<dbReference type="GO" id="GO:0044209">
    <property type="term" value="P:AMP salvage"/>
    <property type="evidence" value="ECO:0007669"/>
    <property type="project" value="UniProtKB-UniRule"/>
</dbReference>
<dbReference type="GO" id="GO:0006166">
    <property type="term" value="P:purine ribonucleoside salvage"/>
    <property type="evidence" value="ECO:0007669"/>
    <property type="project" value="UniProtKB-KW"/>
</dbReference>
<dbReference type="CDD" id="cd06223">
    <property type="entry name" value="PRTases_typeI"/>
    <property type="match status" value="1"/>
</dbReference>
<dbReference type="FunFam" id="3.40.50.2020:FF:000004">
    <property type="entry name" value="Adenine phosphoribosyltransferase"/>
    <property type="match status" value="1"/>
</dbReference>
<dbReference type="Gene3D" id="3.40.50.2020">
    <property type="match status" value="1"/>
</dbReference>
<dbReference type="HAMAP" id="MF_00004">
    <property type="entry name" value="Aden_phosphoribosyltr"/>
    <property type="match status" value="1"/>
</dbReference>
<dbReference type="InterPro" id="IPR005764">
    <property type="entry name" value="Ade_phspho_trans"/>
</dbReference>
<dbReference type="InterPro" id="IPR000836">
    <property type="entry name" value="PRibTrfase_dom"/>
</dbReference>
<dbReference type="InterPro" id="IPR029057">
    <property type="entry name" value="PRTase-like"/>
</dbReference>
<dbReference type="InterPro" id="IPR050054">
    <property type="entry name" value="UPRTase/APRTase"/>
</dbReference>
<dbReference type="NCBIfam" id="TIGR01090">
    <property type="entry name" value="apt"/>
    <property type="match status" value="1"/>
</dbReference>
<dbReference type="NCBIfam" id="NF002633">
    <property type="entry name" value="PRK02304.1-2"/>
    <property type="match status" value="1"/>
</dbReference>
<dbReference type="NCBIfam" id="NF002634">
    <property type="entry name" value="PRK02304.1-3"/>
    <property type="match status" value="1"/>
</dbReference>
<dbReference type="NCBIfam" id="NF002636">
    <property type="entry name" value="PRK02304.1-5"/>
    <property type="match status" value="1"/>
</dbReference>
<dbReference type="PANTHER" id="PTHR32315">
    <property type="entry name" value="ADENINE PHOSPHORIBOSYLTRANSFERASE"/>
    <property type="match status" value="1"/>
</dbReference>
<dbReference type="PANTHER" id="PTHR32315:SF3">
    <property type="entry name" value="ADENINE PHOSPHORIBOSYLTRANSFERASE"/>
    <property type="match status" value="1"/>
</dbReference>
<dbReference type="Pfam" id="PF00156">
    <property type="entry name" value="Pribosyltran"/>
    <property type="match status" value="1"/>
</dbReference>
<dbReference type="SUPFAM" id="SSF53271">
    <property type="entry name" value="PRTase-like"/>
    <property type="match status" value="1"/>
</dbReference>
<protein>
    <recommendedName>
        <fullName evidence="1">Adenine phosphoribosyltransferase</fullName>
        <shortName evidence="1">APRT</shortName>
        <ecNumber evidence="1">2.4.2.7</ecNumber>
    </recommendedName>
</protein>
<accession>Q04F01</accession>
<feature type="chain" id="PRO_1000000318" description="Adenine phosphoribosyltransferase">
    <location>
        <begin position="1"/>
        <end position="175"/>
    </location>
</feature>
<reference key="1">
    <citation type="journal article" date="2006" name="Proc. Natl. Acad. Sci. U.S.A.">
        <title>Comparative genomics of the lactic acid bacteria.</title>
        <authorList>
            <person name="Makarova K.S."/>
            <person name="Slesarev A."/>
            <person name="Wolf Y.I."/>
            <person name="Sorokin A."/>
            <person name="Mirkin B."/>
            <person name="Koonin E.V."/>
            <person name="Pavlov A."/>
            <person name="Pavlova N."/>
            <person name="Karamychev V."/>
            <person name="Polouchine N."/>
            <person name="Shakhova V."/>
            <person name="Grigoriev I."/>
            <person name="Lou Y."/>
            <person name="Rohksar D."/>
            <person name="Lucas S."/>
            <person name="Huang K."/>
            <person name="Goodstein D.M."/>
            <person name="Hawkins T."/>
            <person name="Plengvidhya V."/>
            <person name="Welker D."/>
            <person name="Hughes J."/>
            <person name="Goh Y."/>
            <person name="Benson A."/>
            <person name="Baldwin K."/>
            <person name="Lee J.-H."/>
            <person name="Diaz-Muniz I."/>
            <person name="Dosti B."/>
            <person name="Smeianov V."/>
            <person name="Wechter W."/>
            <person name="Barabote R."/>
            <person name="Lorca G."/>
            <person name="Altermann E."/>
            <person name="Barrangou R."/>
            <person name="Ganesan B."/>
            <person name="Xie Y."/>
            <person name="Rawsthorne H."/>
            <person name="Tamir D."/>
            <person name="Parker C."/>
            <person name="Breidt F."/>
            <person name="Broadbent J.R."/>
            <person name="Hutkins R."/>
            <person name="O'Sullivan D."/>
            <person name="Steele J."/>
            <person name="Unlu G."/>
            <person name="Saier M.H. Jr."/>
            <person name="Klaenhammer T."/>
            <person name="Richardson P."/>
            <person name="Kozyavkin S."/>
            <person name="Weimer B.C."/>
            <person name="Mills D.A."/>
        </authorList>
    </citation>
    <scope>NUCLEOTIDE SEQUENCE [LARGE SCALE GENOMIC DNA]</scope>
    <source>
        <strain>ATCC BAA-331 / PSU-1</strain>
    </source>
</reference>
<proteinExistence type="inferred from homology"/>
<evidence type="ECO:0000255" key="1">
    <source>
        <dbReference type="HAMAP-Rule" id="MF_00004"/>
    </source>
</evidence>
<organism>
    <name type="scientific">Oenococcus oeni (strain ATCC BAA-331 / PSU-1)</name>
    <dbReference type="NCBI Taxonomy" id="203123"/>
    <lineage>
        <taxon>Bacteria</taxon>
        <taxon>Bacillati</taxon>
        <taxon>Bacillota</taxon>
        <taxon>Bacilli</taxon>
        <taxon>Lactobacillales</taxon>
        <taxon>Lactobacillaceae</taxon>
        <taxon>Oenococcus</taxon>
    </lineage>
</organism>
<name>APT_OENOB</name>
<gene>
    <name evidence="1" type="primary">apt</name>
    <name type="ordered locus">OEOE_1069</name>
</gene>
<keyword id="KW-0963">Cytoplasm</keyword>
<keyword id="KW-0328">Glycosyltransferase</keyword>
<keyword id="KW-0660">Purine salvage</keyword>
<keyword id="KW-1185">Reference proteome</keyword>
<keyword id="KW-0808">Transferase</keyword>
<sequence>MDIDLHDYIATTPDFPEKGVMFRDINPLIGNGPAYRQAINELIDFARPLKPDIIAGPEARGFVVGSPMAYALGIGFVPARKYGKLPRKSVSSSYSLEYGKNELQMHVDSIKPGQRVFIVDDLLATGGTITATMDLVRQLGGQVVGTGFFIELADLQGRKKIMEVENVPFKSLLEY</sequence>
<comment type="function">
    <text evidence="1">Catalyzes a salvage reaction resulting in the formation of AMP, that is energically less costly than de novo synthesis.</text>
</comment>
<comment type="catalytic activity">
    <reaction evidence="1">
        <text>AMP + diphosphate = 5-phospho-alpha-D-ribose 1-diphosphate + adenine</text>
        <dbReference type="Rhea" id="RHEA:16609"/>
        <dbReference type="ChEBI" id="CHEBI:16708"/>
        <dbReference type="ChEBI" id="CHEBI:33019"/>
        <dbReference type="ChEBI" id="CHEBI:58017"/>
        <dbReference type="ChEBI" id="CHEBI:456215"/>
        <dbReference type="EC" id="2.4.2.7"/>
    </reaction>
</comment>
<comment type="pathway">
    <text evidence="1">Purine metabolism; AMP biosynthesis via salvage pathway; AMP from adenine: step 1/1.</text>
</comment>
<comment type="subunit">
    <text evidence="1">Homodimer.</text>
</comment>
<comment type="subcellular location">
    <subcellularLocation>
        <location evidence="1">Cytoplasm</location>
    </subcellularLocation>
</comment>
<comment type="similarity">
    <text evidence="1">Belongs to the purine/pyrimidine phosphoribosyltransferase family.</text>
</comment>